<comment type="function">
    <text evidence="1">Modifies, by uridylylation and deuridylylation, the PII regulatory proteins (GlnB and homologs), in response to the nitrogen status of the cell that GlnD senses through the glutamine level. Under low glutamine levels, catalyzes the conversion of the PII proteins and UTP to PII-UMP and PPi, while under higher glutamine levels, GlnD hydrolyzes PII-UMP to PII and UMP (deuridylylation). Thus, controls uridylylation state and activity of the PII proteins, and plays an important role in the regulation of nitrogen assimilation and metabolism.</text>
</comment>
<comment type="catalytic activity">
    <reaction evidence="1">
        <text>[protein-PII]-L-tyrosine + UTP = [protein-PII]-uridylyl-L-tyrosine + diphosphate</text>
        <dbReference type="Rhea" id="RHEA:13673"/>
        <dbReference type="Rhea" id="RHEA-COMP:12147"/>
        <dbReference type="Rhea" id="RHEA-COMP:12148"/>
        <dbReference type="ChEBI" id="CHEBI:33019"/>
        <dbReference type="ChEBI" id="CHEBI:46398"/>
        <dbReference type="ChEBI" id="CHEBI:46858"/>
        <dbReference type="ChEBI" id="CHEBI:90602"/>
        <dbReference type="EC" id="2.7.7.59"/>
    </reaction>
</comment>
<comment type="catalytic activity">
    <reaction evidence="1">
        <text>[protein-PII]-uridylyl-L-tyrosine + H2O = [protein-PII]-L-tyrosine + UMP + H(+)</text>
        <dbReference type="Rhea" id="RHEA:48600"/>
        <dbReference type="Rhea" id="RHEA-COMP:12147"/>
        <dbReference type="Rhea" id="RHEA-COMP:12148"/>
        <dbReference type="ChEBI" id="CHEBI:15377"/>
        <dbReference type="ChEBI" id="CHEBI:15378"/>
        <dbReference type="ChEBI" id="CHEBI:46858"/>
        <dbReference type="ChEBI" id="CHEBI:57865"/>
        <dbReference type="ChEBI" id="CHEBI:90602"/>
    </reaction>
</comment>
<comment type="cofactor">
    <cofactor evidence="1">
        <name>Mg(2+)</name>
        <dbReference type="ChEBI" id="CHEBI:18420"/>
    </cofactor>
</comment>
<comment type="activity regulation">
    <text evidence="1">Uridylyltransferase (UTase) activity is inhibited by glutamine, while glutamine activates uridylyl-removing (UR) activity.</text>
</comment>
<comment type="domain">
    <text evidence="1">Has four distinct domains: an N-terminal nucleotidyltransferase (NT) domain responsible for UTase activity, a central HD domain that encodes UR activity, and two C-terminal ACT domains that seem to have a role in glutamine sensing.</text>
</comment>
<comment type="similarity">
    <text evidence="1">Belongs to the GlnD family.</text>
</comment>
<keyword id="KW-0378">Hydrolase</keyword>
<keyword id="KW-0460">Magnesium</keyword>
<keyword id="KW-0511">Multifunctional enzyme</keyword>
<keyword id="KW-0548">Nucleotidyltransferase</keyword>
<keyword id="KW-0677">Repeat</keyword>
<keyword id="KW-0808">Transferase</keyword>
<protein>
    <recommendedName>
        <fullName evidence="1">Bifunctional uridylyltransferase/uridylyl-removing enzyme</fullName>
        <shortName evidence="1">UTase/UR</shortName>
    </recommendedName>
    <alternativeName>
        <fullName evidence="1">Bifunctional [protein-PII] modification enzyme</fullName>
    </alternativeName>
    <alternativeName>
        <fullName evidence="1">Bifunctional nitrogen sensor protein</fullName>
    </alternativeName>
    <domain>
        <recommendedName>
            <fullName evidence="1">[Protein-PII] uridylyltransferase</fullName>
            <shortName evidence="1">PII uridylyltransferase</shortName>
            <shortName evidence="1">UTase</shortName>
            <ecNumber evidence="1">2.7.7.59</ecNumber>
        </recommendedName>
    </domain>
    <domain>
        <recommendedName>
            <fullName evidence="1">[Protein-PII]-UMP uridylyl-removing enzyme</fullName>
            <shortName evidence="1">UR</shortName>
            <ecNumber evidence="1">3.1.4.-</ecNumber>
        </recommendedName>
    </domain>
</protein>
<reference key="1">
    <citation type="journal article" date="2002" name="Proc. Natl. Acad. Sci. U.S.A.">
        <title>The genome sequence of the facultative intracellular pathogen Brucella melitensis.</title>
        <authorList>
            <person name="DelVecchio V.G."/>
            <person name="Kapatral V."/>
            <person name="Redkar R.J."/>
            <person name="Patra G."/>
            <person name="Mujer C."/>
            <person name="Los T."/>
            <person name="Ivanova N."/>
            <person name="Anderson I."/>
            <person name="Bhattacharyya A."/>
            <person name="Lykidis A."/>
            <person name="Reznik G."/>
            <person name="Jablonski L."/>
            <person name="Larsen N."/>
            <person name="D'Souza M."/>
            <person name="Bernal A."/>
            <person name="Mazur M."/>
            <person name="Goltsman E."/>
            <person name="Selkov E."/>
            <person name="Elzer P.H."/>
            <person name="Hagius S."/>
            <person name="O'Callaghan D."/>
            <person name="Letesson J.-J."/>
            <person name="Haselkorn R."/>
            <person name="Kyrpides N.C."/>
            <person name="Overbeek R."/>
        </authorList>
    </citation>
    <scope>NUCLEOTIDE SEQUENCE [LARGE SCALE GENOMIC DNA]</scope>
    <source>
        <strain>ATCC 23456 / CCUG 17765 / NCTC 10094 / 16M</strain>
    </source>
</reference>
<sequence>MSAHDLKLEEIVNAETLRRKLNELADTADESYTSLPMRKVVLQTLKDALASGRANAEDMLMKDGGGTLCAKRLCYLMDTLIDILFEFATTRAYPTRNPSKAENMALVAVGGYGRGGLAQGSDIDLLFLLPYKQTPWGEQVVEYTLYMLWDMGLKVGHSTRNIDECIRLAREDMTIRTALLDARFLTGDKDLFRTLEIRFEEEIVKGTEPEFIQAKLAERDARHRKAGETRYLVEPNVKEGKGGQRDLHTLFWITKYFYRVKTKEELVKLGVLSRAELKLFNKAEDFLWAVRCHMHFATLKAEERLSFDIQPEIAQRLGYTAHPGQNYVERFMKHYFLVAKDVGDLTRIICAALEEQQAKHVPGFNRIFLTFSRRKRKLSDDGAFISENHRINIARPDIFRQDPVNMIRLFHLADRHGLEFHPEAMQSLTRSLKLINADLRENPEANRLFLEILTSPRNPELILRRMNESGVLGKFIPDFGKIVAMMQFNMYHHYTVDEHLLRCIAVLSEIEHGELKTEHPLSNHLITTIKRDRNLLYVTLLLHDIAKGRPEDHSIAGARIARRLCPRFGLTPSETETVEWLVREHLTMSMVAQSRDLNDRKTIIDFADTVQTMERLKLLLILTVCDIKAVGPGIWNGWKGQLLRTLFYETELVLTGGFSELSRAARDKQAREALAERLSDWPKEERDAYLALPYTNYFLTVSLDDQVRHAHFIRDADQQGRALVTMAKPHAFEAVTEITVLAPDHPRLLSVITGACAAAGGNIVDAQIFTTSDGRALDTILISREFDTDDDERRRAERVGKVIEDVLSGKAHLPDMLAKRTKPKKAARAFKVEPRVEINNTLSNKFTVIEVEGLDRPGLLSELTGLISDLSLDIASAHITTFGEKVIDSFYVTDLVGHKISNATRQGNIKRKLLALLGAENGARTNGRSPQAAA</sequence>
<accession>Q8YES3</accession>
<evidence type="ECO:0000255" key="1">
    <source>
        <dbReference type="HAMAP-Rule" id="MF_00277"/>
    </source>
</evidence>
<evidence type="ECO:0000255" key="2">
    <source>
        <dbReference type="PROSITE-ProRule" id="PRU01175"/>
    </source>
</evidence>
<organism>
    <name type="scientific">Brucella melitensis biotype 1 (strain ATCC 23456 / CCUG 17765 / NCTC 10094 / 16M)</name>
    <dbReference type="NCBI Taxonomy" id="224914"/>
    <lineage>
        <taxon>Bacteria</taxon>
        <taxon>Pseudomonadati</taxon>
        <taxon>Pseudomonadota</taxon>
        <taxon>Alphaproteobacteria</taxon>
        <taxon>Hyphomicrobiales</taxon>
        <taxon>Brucellaceae</taxon>
        <taxon>Brucella/Ochrobactrum group</taxon>
        <taxon>Brucella</taxon>
    </lineage>
</organism>
<dbReference type="EC" id="2.7.7.59" evidence="1"/>
<dbReference type="EC" id="3.1.4.-" evidence="1"/>
<dbReference type="EMBL" id="AE008917">
    <property type="protein sequence ID" value="AAL52985.1"/>
    <property type="molecule type" value="Genomic_DNA"/>
</dbReference>
<dbReference type="PIR" id="AF3477">
    <property type="entry name" value="AF3477"/>
</dbReference>
<dbReference type="RefSeq" id="WP_002965392.1">
    <property type="nucleotide sequence ID" value="NZ_GG703778.1"/>
</dbReference>
<dbReference type="SMR" id="Q8YES3"/>
<dbReference type="KEGG" id="bme:BMEI1804"/>
<dbReference type="KEGG" id="bmel:DK63_1683"/>
<dbReference type="PATRIC" id="fig|224914.52.peg.1778"/>
<dbReference type="eggNOG" id="COG2844">
    <property type="taxonomic scope" value="Bacteria"/>
</dbReference>
<dbReference type="PhylomeDB" id="Q8YES3"/>
<dbReference type="Proteomes" id="UP000000419">
    <property type="component" value="Chromosome I"/>
</dbReference>
<dbReference type="GO" id="GO:0008773">
    <property type="term" value="F:[protein-PII] uridylyltransferase activity"/>
    <property type="evidence" value="ECO:0007669"/>
    <property type="project" value="UniProtKB-UniRule"/>
</dbReference>
<dbReference type="GO" id="GO:0008081">
    <property type="term" value="F:phosphoric diester hydrolase activity"/>
    <property type="evidence" value="ECO:0007669"/>
    <property type="project" value="UniProtKB-UniRule"/>
</dbReference>
<dbReference type="GO" id="GO:0006808">
    <property type="term" value="P:regulation of nitrogen utilization"/>
    <property type="evidence" value="ECO:0007669"/>
    <property type="project" value="UniProtKB-UniRule"/>
</dbReference>
<dbReference type="CDD" id="cd04899">
    <property type="entry name" value="ACT_ACR-UUR-like_2"/>
    <property type="match status" value="1"/>
</dbReference>
<dbReference type="CDD" id="cd04900">
    <property type="entry name" value="ACT_UUR-like_1"/>
    <property type="match status" value="1"/>
</dbReference>
<dbReference type="CDD" id="cd00077">
    <property type="entry name" value="HDc"/>
    <property type="match status" value="1"/>
</dbReference>
<dbReference type="CDD" id="cd05401">
    <property type="entry name" value="NT_GlnE_GlnD_like"/>
    <property type="match status" value="1"/>
</dbReference>
<dbReference type="Gene3D" id="3.30.70.260">
    <property type="match status" value="1"/>
</dbReference>
<dbReference type="Gene3D" id="3.30.460.10">
    <property type="entry name" value="Beta Polymerase, domain 2"/>
    <property type="match status" value="1"/>
</dbReference>
<dbReference type="Gene3D" id="1.10.3090.10">
    <property type="entry name" value="cca-adding enzyme, domain 2"/>
    <property type="match status" value="1"/>
</dbReference>
<dbReference type="HAMAP" id="MF_00277">
    <property type="entry name" value="PII_uridylyl_transf"/>
    <property type="match status" value="1"/>
</dbReference>
<dbReference type="InterPro" id="IPR045865">
    <property type="entry name" value="ACT-like_dom_sf"/>
</dbReference>
<dbReference type="InterPro" id="IPR002912">
    <property type="entry name" value="ACT_dom"/>
</dbReference>
<dbReference type="InterPro" id="IPR003607">
    <property type="entry name" value="HD/PDEase_dom"/>
</dbReference>
<dbReference type="InterPro" id="IPR006674">
    <property type="entry name" value="HD_domain"/>
</dbReference>
<dbReference type="InterPro" id="IPR043519">
    <property type="entry name" value="NT_sf"/>
</dbReference>
<dbReference type="InterPro" id="IPR013546">
    <property type="entry name" value="PII_UdlTrfase/GS_AdlTrfase"/>
</dbReference>
<dbReference type="InterPro" id="IPR010043">
    <property type="entry name" value="UTase/UR"/>
</dbReference>
<dbReference type="NCBIfam" id="NF003467">
    <property type="entry name" value="PRK05092.1"/>
    <property type="match status" value="1"/>
</dbReference>
<dbReference type="NCBIfam" id="TIGR01693">
    <property type="entry name" value="UTase_glnD"/>
    <property type="match status" value="1"/>
</dbReference>
<dbReference type="PANTHER" id="PTHR47320">
    <property type="entry name" value="BIFUNCTIONAL URIDYLYLTRANSFERASE/URIDYLYL-REMOVING ENZYME"/>
    <property type="match status" value="1"/>
</dbReference>
<dbReference type="PANTHER" id="PTHR47320:SF1">
    <property type="entry name" value="BIFUNCTIONAL URIDYLYLTRANSFERASE_URIDYLYL-REMOVING ENZYME"/>
    <property type="match status" value="1"/>
</dbReference>
<dbReference type="Pfam" id="PF01842">
    <property type="entry name" value="ACT"/>
    <property type="match status" value="2"/>
</dbReference>
<dbReference type="Pfam" id="PF08335">
    <property type="entry name" value="GlnD_UR_UTase"/>
    <property type="match status" value="1"/>
</dbReference>
<dbReference type="Pfam" id="PF01966">
    <property type="entry name" value="HD"/>
    <property type="match status" value="1"/>
</dbReference>
<dbReference type="PIRSF" id="PIRSF006288">
    <property type="entry name" value="PII_uridyltransf"/>
    <property type="match status" value="1"/>
</dbReference>
<dbReference type="SMART" id="SM00471">
    <property type="entry name" value="HDc"/>
    <property type="match status" value="1"/>
</dbReference>
<dbReference type="SUPFAM" id="SSF55021">
    <property type="entry name" value="ACT-like"/>
    <property type="match status" value="2"/>
</dbReference>
<dbReference type="SUPFAM" id="SSF81301">
    <property type="entry name" value="Nucleotidyltransferase"/>
    <property type="match status" value="1"/>
</dbReference>
<dbReference type="SUPFAM" id="SSF81593">
    <property type="entry name" value="Nucleotidyltransferase substrate binding subunit/domain"/>
    <property type="match status" value="1"/>
</dbReference>
<dbReference type="SUPFAM" id="SSF81891">
    <property type="entry name" value="Poly A polymerase C-terminal region-like"/>
    <property type="match status" value="1"/>
</dbReference>
<dbReference type="PROSITE" id="PS51671">
    <property type="entry name" value="ACT"/>
    <property type="match status" value="2"/>
</dbReference>
<dbReference type="PROSITE" id="PS51831">
    <property type="entry name" value="HD"/>
    <property type="match status" value="1"/>
</dbReference>
<proteinExistence type="inferred from homology"/>
<gene>
    <name evidence="1" type="primary">glnD</name>
    <name type="ordered locus">BMEI1804</name>
</gene>
<name>GLND_BRUME</name>
<feature type="chain" id="PRO_0000192723" description="Bifunctional uridylyltransferase/uridylyl-removing enzyme">
    <location>
        <begin position="1"/>
        <end position="934"/>
    </location>
</feature>
<feature type="domain" description="HD" evidence="2">
    <location>
        <begin position="496"/>
        <end position="613"/>
    </location>
</feature>
<feature type="domain" description="ACT 1" evidence="1">
    <location>
        <begin position="737"/>
        <end position="818"/>
    </location>
</feature>
<feature type="domain" description="ACT 2" evidence="1">
    <location>
        <begin position="848"/>
        <end position="931"/>
    </location>
</feature>
<feature type="region of interest" description="Uridylyltransferase">
    <location>
        <begin position="1"/>
        <end position="379"/>
    </location>
</feature>
<feature type="region of interest" description="Uridylyl-removing">
    <location>
        <begin position="380"/>
        <end position="736"/>
    </location>
</feature>